<comment type="function">
    <text evidence="1">Component of the acetyl coenzyme A carboxylase (ACC) complex. Biotin carboxylase (BC) catalyzes the carboxylation of biotin on its carrier protein (BCCP) and then the CO(2) group is transferred by the transcarboxylase to acetyl-CoA to form malonyl-CoA.</text>
</comment>
<comment type="catalytic activity">
    <reaction evidence="1">
        <text>N(6)-carboxybiotinyl-L-lysyl-[protein] + acetyl-CoA = N(6)-biotinyl-L-lysyl-[protein] + malonyl-CoA</text>
        <dbReference type="Rhea" id="RHEA:54728"/>
        <dbReference type="Rhea" id="RHEA-COMP:10505"/>
        <dbReference type="Rhea" id="RHEA-COMP:10506"/>
        <dbReference type="ChEBI" id="CHEBI:57288"/>
        <dbReference type="ChEBI" id="CHEBI:57384"/>
        <dbReference type="ChEBI" id="CHEBI:83144"/>
        <dbReference type="ChEBI" id="CHEBI:83145"/>
        <dbReference type="EC" id="2.1.3.15"/>
    </reaction>
</comment>
<comment type="cofactor">
    <cofactor evidence="1">
        <name>Zn(2+)</name>
        <dbReference type="ChEBI" id="CHEBI:29105"/>
    </cofactor>
    <text evidence="1">Binds 1 zinc ion per subunit.</text>
</comment>
<comment type="pathway">
    <text evidence="1">Lipid metabolism; malonyl-CoA biosynthesis; malonyl-CoA from acetyl-CoA: step 1/1.</text>
</comment>
<comment type="subunit">
    <text evidence="1">Acetyl-CoA carboxylase is a heterohexamer composed of biotin carboxyl carrier protein (AccB), biotin carboxylase (AccC) and two subunits each of ACCase subunit alpha (AccA) and ACCase subunit beta (AccD).</text>
</comment>
<comment type="subcellular location">
    <subcellularLocation>
        <location evidence="1">Cytoplasm</location>
    </subcellularLocation>
</comment>
<comment type="similarity">
    <text evidence="1">Belongs to the AccD/PCCB family.</text>
</comment>
<feature type="chain" id="PRO_0000389817" description="Acetyl-coenzyme A carboxylase carboxyl transferase subunit beta">
    <location>
        <begin position="1"/>
        <end position="283"/>
    </location>
</feature>
<feature type="domain" description="CoA carboxyltransferase N-terminal" evidence="2">
    <location>
        <begin position="27"/>
        <end position="283"/>
    </location>
</feature>
<feature type="zinc finger region" description="C4-type" evidence="1">
    <location>
        <begin position="31"/>
        <end position="53"/>
    </location>
</feature>
<feature type="binding site" evidence="1">
    <location>
        <position position="31"/>
    </location>
    <ligand>
        <name>Zn(2+)</name>
        <dbReference type="ChEBI" id="CHEBI:29105"/>
    </ligand>
</feature>
<feature type="binding site" evidence="1">
    <location>
        <position position="34"/>
    </location>
    <ligand>
        <name>Zn(2+)</name>
        <dbReference type="ChEBI" id="CHEBI:29105"/>
    </ligand>
</feature>
<feature type="binding site" evidence="1">
    <location>
        <position position="50"/>
    </location>
    <ligand>
        <name>Zn(2+)</name>
        <dbReference type="ChEBI" id="CHEBI:29105"/>
    </ligand>
</feature>
<feature type="binding site" evidence="1">
    <location>
        <position position="53"/>
    </location>
    <ligand>
        <name>Zn(2+)</name>
        <dbReference type="ChEBI" id="CHEBI:29105"/>
    </ligand>
</feature>
<protein>
    <recommendedName>
        <fullName evidence="1">Acetyl-coenzyme A carboxylase carboxyl transferase subunit beta</fullName>
        <shortName evidence="1">ACCase subunit beta</shortName>
        <shortName evidence="1">Acetyl-CoA carboxylase carboxyltransferase subunit beta</shortName>
        <ecNumber evidence="1">2.1.3.15</ecNumber>
    </recommendedName>
</protein>
<keyword id="KW-0067">ATP-binding</keyword>
<keyword id="KW-0963">Cytoplasm</keyword>
<keyword id="KW-0275">Fatty acid biosynthesis</keyword>
<keyword id="KW-0276">Fatty acid metabolism</keyword>
<keyword id="KW-0444">Lipid biosynthesis</keyword>
<keyword id="KW-0443">Lipid metabolism</keyword>
<keyword id="KW-0479">Metal-binding</keyword>
<keyword id="KW-0547">Nucleotide-binding</keyword>
<keyword id="KW-1185">Reference proteome</keyword>
<keyword id="KW-0808">Transferase</keyword>
<keyword id="KW-0862">Zinc</keyword>
<keyword id="KW-0863">Zinc-finger</keyword>
<sequence>MILDLFRKQKYITVQPESETREIPEGVWVKCERCGEILFKKELDKNYKVCLKCGFHFRLSAFERIAMTVDEGSFKELDAALLPVNPFNLPDYESKLVSARQSTGLNEAVLTGEAAIEGYPAVVVVMDARFMMASMGTVVGEKITRAAEAAAAGRRPLIIFSASGGARMQEGILSLMQMAKTVAALARLGEEGQLYISVLTDPTTGGVSASFAALGDIVIAEPGALIGFAGPRVIEQTIRQKLPEGFQRAEFLKQHGFVDMIVPRPQMKETLARLLDLHLRGEK</sequence>
<gene>
    <name evidence="1" type="primary">accD</name>
    <name type="ordered locus">PTH_2217</name>
</gene>
<accession>A5D014</accession>
<dbReference type="EC" id="2.1.3.15" evidence="1"/>
<dbReference type="EMBL" id="AP009389">
    <property type="protein sequence ID" value="BAF60398.1"/>
    <property type="molecule type" value="Genomic_DNA"/>
</dbReference>
<dbReference type="SMR" id="A5D014"/>
<dbReference type="STRING" id="370438.PTH_2217"/>
<dbReference type="KEGG" id="pth:PTH_2217"/>
<dbReference type="eggNOG" id="COG0777">
    <property type="taxonomic scope" value="Bacteria"/>
</dbReference>
<dbReference type="HOGENOM" id="CLU_015486_1_1_9"/>
<dbReference type="UniPathway" id="UPA00655">
    <property type="reaction ID" value="UER00711"/>
</dbReference>
<dbReference type="Proteomes" id="UP000006556">
    <property type="component" value="Chromosome"/>
</dbReference>
<dbReference type="GO" id="GO:0009317">
    <property type="term" value="C:acetyl-CoA carboxylase complex"/>
    <property type="evidence" value="ECO:0007669"/>
    <property type="project" value="InterPro"/>
</dbReference>
<dbReference type="GO" id="GO:0003989">
    <property type="term" value="F:acetyl-CoA carboxylase activity"/>
    <property type="evidence" value="ECO:0007669"/>
    <property type="project" value="InterPro"/>
</dbReference>
<dbReference type="GO" id="GO:0005524">
    <property type="term" value="F:ATP binding"/>
    <property type="evidence" value="ECO:0007669"/>
    <property type="project" value="UniProtKB-KW"/>
</dbReference>
<dbReference type="GO" id="GO:0016743">
    <property type="term" value="F:carboxyl- or carbamoyltransferase activity"/>
    <property type="evidence" value="ECO:0007669"/>
    <property type="project" value="UniProtKB-UniRule"/>
</dbReference>
<dbReference type="GO" id="GO:0008270">
    <property type="term" value="F:zinc ion binding"/>
    <property type="evidence" value="ECO:0007669"/>
    <property type="project" value="UniProtKB-UniRule"/>
</dbReference>
<dbReference type="GO" id="GO:0006633">
    <property type="term" value="P:fatty acid biosynthetic process"/>
    <property type="evidence" value="ECO:0007669"/>
    <property type="project" value="UniProtKB-KW"/>
</dbReference>
<dbReference type="GO" id="GO:2001295">
    <property type="term" value="P:malonyl-CoA biosynthetic process"/>
    <property type="evidence" value="ECO:0007669"/>
    <property type="project" value="UniProtKB-UniRule"/>
</dbReference>
<dbReference type="Gene3D" id="3.90.226.10">
    <property type="entry name" value="2-enoyl-CoA Hydratase, Chain A, domain 1"/>
    <property type="match status" value="1"/>
</dbReference>
<dbReference type="HAMAP" id="MF_01395">
    <property type="entry name" value="AcetylCoA_CT_beta"/>
    <property type="match status" value="1"/>
</dbReference>
<dbReference type="InterPro" id="IPR034733">
    <property type="entry name" value="AcCoA_carboxyl_beta"/>
</dbReference>
<dbReference type="InterPro" id="IPR000438">
    <property type="entry name" value="Acetyl_CoA_COase_Trfase_b_su"/>
</dbReference>
<dbReference type="InterPro" id="IPR029045">
    <property type="entry name" value="ClpP/crotonase-like_dom_sf"/>
</dbReference>
<dbReference type="InterPro" id="IPR011762">
    <property type="entry name" value="COA_CT_N"/>
</dbReference>
<dbReference type="InterPro" id="IPR041010">
    <property type="entry name" value="Znf-ACC"/>
</dbReference>
<dbReference type="NCBIfam" id="TIGR00515">
    <property type="entry name" value="accD"/>
    <property type="match status" value="1"/>
</dbReference>
<dbReference type="PANTHER" id="PTHR42995">
    <property type="entry name" value="ACETYL-COENZYME A CARBOXYLASE CARBOXYL TRANSFERASE SUBUNIT BETA, CHLOROPLASTIC"/>
    <property type="match status" value="1"/>
</dbReference>
<dbReference type="PANTHER" id="PTHR42995:SF5">
    <property type="entry name" value="ACETYL-COENZYME A CARBOXYLASE CARBOXYL TRANSFERASE SUBUNIT BETA, CHLOROPLASTIC"/>
    <property type="match status" value="1"/>
</dbReference>
<dbReference type="Pfam" id="PF01039">
    <property type="entry name" value="Carboxyl_trans"/>
    <property type="match status" value="1"/>
</dbReference>
<dbReference type="Pfam" id="PF17848">
    <property type="entry name" value="Zn_ribbon_ACC"/>
    <property type="match status" value="1"/>
</dbReference>
<dbReference type="PRINTS" id="PR01070">
    <property type="entry name" value="ACCCTRFRASEB"/>
</dbReference>
<dbReference type="SUPFAM" id="SSF52096">
    <property type="entry name" value="ClpP/crotonase"/>
    <property type="match status" value="1"/>
</dbReference>
<dbReference type="PROSITE" id="PS50980">
    <property type="entry name" value="COA_CT_NTER"/>
    <property type="match status" value="1"/>
</dbReference>
<proteinExistence type="inferred from homology"/>
<organism>
    <name type="scientific">Pelotomaculum thermopropionicum (strain DSM 13744 / JCM 10971 / SI)</name>
    <dbReference type="NCBI Taxonomy" id="370438"/>
    <lineage>
        <taxon>Bacteria</taxon>
        <taxon>Bacillati</taxon>
        <taxon>Bacillota</taxon>
        <taxon>Clostridia</taxon>
        <taxon>Eubacteriales</taxon>
        <taxon>Desulfotomaculaceae</taxon>
        <taxon>Pelotomaculum</taxon>
    </lineage>
</organism>
<evidence type="ECO:0000255" key="1">
    <source>
        <dbReference type="HAMAP-Rule" id="MF_01395"/>
    </source>
</evidence>
<evidence type="ECO:0000255" key="2">
    <source>
        <dbReference type="PROSITE-ProRule" id="PRU01136"/>
    </source>
</evidence>
<name>ACCD_PELTS</name>
<reference key="1">
    <citation type="journal article" date="2008" name="Genome Res.">
        <title>The genome of Pelotomaculum thermopropionicum reveals niche-associated evolution in anaerobic microbiota.</title>
        <authorList>
            <person name="Kosaka T."/>
            <person name="Kato S."/>
            <person name="Shimoyama T."/>
            <person name="Ishii S."/>
            <person name="Abe T."/>
            <person name="Watanabe K."/>
        </authorList>
    </citation>
    <scope>NUCLEOTIDE SEQUENCE [LARGE SCALE GENOMIC DNA]</scope>
    <source>
        <strain>DSM 13744 / JCM 10971 / SI</strain>
    </source>
</reference>